<keyword id="KW-0067">ATP-binding</keyword>
<keyword id="KW-0997">Cell inner membrane</keyword>
<keyword id="KW-1003">Cell membrane</keyword>
<keyword id="KW-0406">Ion transport</keyword>
<keyword id="KW-0472">Membrane</keyword>
<keyword id="KW-0533">Nickel</keyword>
<keyword id="KW-0921">Nickel transport</keyword>
<keyword id="KW-0547">Nucleotide-binding</keyword>
<keyword id="KW-1278">Translocase</keyword>
<keyword id="KW-0813">Transport</keyword>
<dbReference type="EC" id="7.2.2.11" evidence="1"/>
<dbReference type="EMBL" id="CP000266">
    <property type="protein sequence ID" value="ABF05522.1"/>
    <property type="molecule type" value="Genomic_DNA"/>
</dbReference>
<dbReference type="RefSeq" id="WP_000173670.1">
    <property type="nucleotide sequence ID" value="NC_008258.1"/>
</dbReference>
<dbReference type="SMR" id="Q0SZJ3"/>
<dbReference type="KEGG" id="sfv:SFV_3483"/>
<dbReference type="HOGENOM" id="CLU_000604_1_23_6"/>
<dbReference type="Proteomes" id="UP000000659">
    <property type="component" value="Chromosome"/>
</dbReference>
<dbReference type="GO" id="GO:0005886">
    <property type="term" value="C:plasma membrane"/>
    <property type="evidence" value="ECO:0007669"/>
    <property type="project" value="UniProtKB-SubCell"/>
</dbReference>
<dbReference type="GO" id="GO:0015413">
    <property type="term" value="F:ABC-type nickel transporter activity"/>
    <property type="evidence" value="ECO:0007669"/>
    <property type="project" value="UniProtKB-EC"/>
</dbReference>
<dbReference type="GO" id="GO:0005524">
    <property type="term" value="F:ATP binding"/>
    <property type="evidence" value="ECO:0007669"/>
    <property type="project" value="UniProtKB-KW"/>
</dbReference>
<dbReference type="GO" id="GO:0016887">
    <property type="term" value="F:ATP hydrolysis activity"/>
    <property type="evidence" value="ECO:0007669"/>
    <property type="project" value="InterPro"/>
</dbReference>
<dbReference type="GO" id="GO:0016151">
    <property type="term" value="F:nickel cation binding"/>
    <property type="evidence" value="ECO:0007669"/>
    <property type="project" value="InterPro"/>
</dbReference>
<dbReference type="CDD" id="cd03257">
    <property type="entry name" value="ABC_NikE_OppD_transporters"/>
    <property type="match status" value="1"/>
</dbReference>
<dbReference type="FunFam" id="3.40.50.300:FF:001020">
    <property type="entry name" value="Nickel import ATP-binding protein NikE"/>
    <property type="match status" value="1"/>
</dbReference>
<dbReference type="Gene3D" id="3.40.50.300">
    <property type="entry name" value="P-loop containing nucleotide triphosphate hydrolases"/>
    <property type="match status" value="1"/>
</dbReference>
<dbReference type="InterPro" id="IPR003593">
    <property type="entry name" value="AAA+_ATPase"/>
</dbReference>
<dbReference type="InterPro" id="IPR050319">
    <property type="entry name" value="ABC_transp_ATP-bind"/>
</dbReference>
<dbReference type="InterPro" id="IPR003439">
    <property type="entry name" value="ABC_transporter-like_ATP-bd"/>
</dbReference>
<dbReference type="InterPro" id="IPR017871">
    <property type="entry name" value="ABC_transporter-like_CS"/>
</dbReference>
<dbReference type="InterPro" id="IPR014137">
    <property type="entry name" value="Nickel_NikE"/>
</dbReference>
<dbReference type="InterPro" id="IPR027417">
    <property type="entry name" value="P-loop_NTPase"/>
</dbReference>
<dbReference type="NCBIfam" id="TIGR02769">
    <property type="entry name" value="nickel_nikE"/>
    <property type="match status" value="1"/>
</dbReference>
<dbReference type="NCBIfam" id="NF007739">
    <property type="entry name" value="PRK10419.1"/>
    <property type="match status" value="1"/>
</dbReference>
<dbReference type="PANTHER" id="PTHR43776:SF7">
    <property type="entry name" value="D,D-DIPEPTIDE TRANSPORT ATP-BINDING PROTEIN DDPF-RELATED"/>
    <property type="match status" value="1"/>
</dbReference>
<dbReference type="PANTHER" id="PTHR43776">
    <property type="entry name" value="TRANSPORT ATP-BINDING PROTEIN"/>
    <property type="match status" value="1"/>
</dbReference>
<dbReference type="Pfam" id="PF00005">
    <property type="entry name" value="ABC_tran"/>
    <property type="match status" value="1"/>
</dbReference>
<dbReference type="SMART" id="SM00382">
    <property type="entry name" value="AAA"/>
    <property type="match status" value="1"/>
</dbReference>
<dbReference type="SUPFAM" id="SSF52540">
    <property type="entry name" value="P-loop containing nucleoside triphosphate hydrolases"/>
    <property type="match status" value="1"/>
</dbReference>
<dbReference type="PROSITE" id="PS00211">
    <property type="entry name" value="ABC_TRANSPORTER_1"/>
    <property type="match status" value="1"/>
</dbReference>
<dbReference type="PROSITE" id="PS50893">
    <property type="entry name" value="ABC_TRANSPORTER_2"/>
    <property type="match status" value="1"/>
</dbReference>
<dbReference type="PROSITE" id="PS51248">
    <property type="entry name" value="NIKE"/>
    <property type="match status" value="1"/>
</dbReference>
<gene>
    <name evidence="1" type="primary">nikE</name>
    <name type="ordered locus">SFV_3483</name>
</gene>
<organism>
    <name type="scientific">Shigella flexneri serotype 5b (strain 8401)</name>
    <dbReference type="NCBI Taxonomy" id="373384"/>
    <lineage>
        <taxon>Bacteria</taxon>
        <taxon>Pseudomonadati</taxon>
        <taxon>Pseudomonadota</taxon>
        <taxon>Gammaproteobacteria</taxon>
        <taxon>Enterobacterales</taxon>
        <taxon>Enterobacteriaceae</taxon>
        <taxon>Shigella</taxon>
    </lineage>
</organism>
<accession>Q0SZJ3</accession>
<comment type="function">
    <text evidence="1">Part of the ABC transporter complex NikABCDE involved in nickel import. Responsible for energy coupling to the transport system.</text>
</comment>
<comment type="catalytic activity">
    <reaction evidence="1">
        <text>Ni(2+)(out) + ATP + H2O = Ni(2+)(in) + ADP + phosphate + H(+)</text>
        <dbReference type="Rhea" id="RHEA:15557"/>
        <dbReference type="ChEBI" id="CHEBI:15377"/>
        <dbReference type="ChEBI" id="CHEBI:15378"/>
        <dbReference type="ChEBI" id="CHEBI:30616"/>
        <dbReference type="ChEBI" id="CHEBI:43474"/>
        <dbReference type="ChEBI" id="CHEBI:49786"/>
        <dbReference type="ChEBI" id="CHEBI:456216"/>
        <dbReference type="EC" id="7.2.2.11"/>
    </reaction>
</comment>
<comment type="subunit">
    <text evidence="1">The complex is composed of two ATP-binding proteins (NikD and NikE), two transmembrane proteins (NikB and NikC) and a solute-binding protein (NikA).</text>
</comment>
<comment type="subcellular location">
    <subcellularLocation>
        <location evidence="1">Cell inner membrane</location>
        <topology evidence="1">Peripheral membrane protein</topology>
    </subcellularLocation>
</comment>
<comment type="similarity">
    <text evidence="1">Belongs to the ABC transporter superfamily. Nickel importer (TC 3.A.1.5.3) family.</text>
</comment>
<proteinExistence type="inferred from homology"/>
<protein>
    <recommendedName>
        <fullName evidence="1">Nickel import ATP-binding protein NikE</fullName>
        <ecNumber evidence="1">7.2.2.11</ecNumber>
    </recommendedName>
</protein>
<reference key="1">
    <citation type="journal article" date="2006" name="BMC Genomics">
        <title>Complete genome sequence of Shigella flexneri 5b and comparison with Shigella flexneri 2a.</title>
        <authorList>
            <person name="Nie H."/>
            <person name="Yang F."/>
            <person name="Zhang X."/>
            <person name="Yang J."/>
            <person name="Chen L."/>
            <person name="Wang J."/>
            <person name="Xiong Z."/>
            <person name="Peng J."/>
            <person name="Sun L."/>
            <person name="Dong J."/>
            <person name="Xue Y."/>
            <person name="Xu X."/>
            <person name="Chen S."/>
            <person name="Yao Z."/>
            <person name="Shen Y."/>
            <person name="Jin Q."/>
        </authorList>
    </citation>
    <scope>NUCLEOTIDE SEQUENCE [LARGE SCALE GENOMIC DNA]</scope>
    <source>
        <strain>8401</strain>
    </source>
</reference>
<sequence length="268" mass="29575">MTLLNVCGLSHHYAHGGFSGKHQHQAVLNNVSLTLKSGETVALLGRSGCGKSTLARLLVGLESPSQGNISWRGESLAKLNRAQRKAFRRDIQMVFQDSISAVNPRKTVREILREPMRHLLSLKKSEQLARASEMLKAVDLDDSVLDKRPPQLSGGQLQLVCLARALAVEPKLLILDEAVSNLDLVLQAGVIRLLKKLQQQFGTACLFITHDLRLVERFCQRVMVMDNGQIAETQAVGDKLTFSSDAGRVLQNAVLPAFPVRRRTSEKV</sequence>
<name>NIKE_SHIF8</name>
<evidence type="ECO:0000255" key="1">
    <source>
        <dbReference type="HAMAP-Rule" id="MF_01712"/>
    </source>
</evidence>
<feature type="chain" id="PRO_0000274125" description="Nickel import ATP-binding protein NikE">
    <location>
        <begin position="1"/>
        <end position="268"/>
    </location>
</feature>
<feature type="domain" description="ABC transporter" evidence="1">
    <location>
        <begin position="4"/>
        <end position="252"/>
    </location>
</feature>
<feature type="binding site" evidence="1">
    <location>
        <begin position="45"/>
        <end position="52"/>
    </location>
    <ligand>
        <name>ATP</name>
        <dbReference type="ChEBI" id="CHEBI:30616"/>
    </ligand>
</feature>